<feature type="signal peptide" evidence="3">
    <location>
        <begin position="1"/>
        <end position="21"/>
    </location>
</feature>
<feature type="chain" id="PRO_0000041836" description="Prolyl 4-hydroxylase subunit alpha-2">
    <location>
        <begin position="22"/>
        <end position="534"/>
    </location>
</feature>
<feature type="repeat" description="TPR">
    <location>
        <begin position="207"/>
        <end position="240"/>
    </location>
</feature>
<feature type="domain" description="Fe2OG dioxygenase" evidence="4">
    <location>
        <begin position="413"/>
        <end position="519"/>
    </location>
</feature>
<feature type="binding site" evidence="4">
    <location>
        <position position="431"/>
    </location>
    <ligand>
        <name>Fe cation</name>
        <dbReference type="ChEBI" id="CHEBI:24875"/>
    </ligand>
</feature>
<feature type="binding site" evidence="4">
    <location>
        <position position="433"/>
    </location>
    <ligand>
        <name>Fe cation</name>
        <dbReference type="ChEBI" id="CHEBI:24875"/>
    </ligand>
</feature>
<feature type="binding site" evidence="4">
    <location>
        <position position="500"/>
    </location>
    <ligand>
        <name>Fe cation</name>
        <dbReference type="ChEBI" id="CHEBI:24875"/>
    </ligand>
</feature>
<feature type="binding site" evidence="4">
    <location>
        <position position="510"/>
    </location>
    <ligand>
        <name>2-oxoglutarate</name>
        <dbReference type="ChEBI" id="CHEBI:16810"/>
    </ligand>
</feature>
<feature type="glycosylation site" description="N-linked (GlcNAc...) asparagine" evidence="3">
    <location>
        <position position="115"/>
    </location>
</feature>
<feature type="glycosylation site" description="N-linked (GlcNAc...) asparagine" evidence="3">
    <location>
        <position position="263"/>
    </location>
</feature>
<protein>
    <recommendedName>
        <fullName>Prolyl 4-hydroxylase subunit alpha-2</fullName>
        <shortName>4-PH alpha-2</shortName>
        <ecNumber evidence="5">1.14.11.2</ecNumber>
    </recommendedName>
    <alternativeName>
        <fullName>Procollagen-proline,2-oxoglutarate-4-dioxygenase subunit alpha-2</fullName>
    </alternativeName>
</protein>
<reference key="1">
    <citation type="journal article" date="2005" name="Genome Biol.">
        <title>Full-length cDNAs from chicken bursal lymphocytes to facilitate gene function analysis.</title>
        <authorList>
            <person name="Caldwell R.B."/>
            <person name="Kierzek A.M."/>
            <person name="Arakawa H."/>
            <person name="Bezzubov Y."/>
            <person name="Zaim J."/>
            <person name="Fiedler P."/>
            <person name="Kutter S."/>
            <person name="Blagodatski A."/>
            <person name="Kostovska D."/>
            <person name="Koter M."/>
            <person name="Plachy J."/>
            <person name="Carninci P."/>
            <person name="Hayashizaki Y."/>
            <person name="Buerstedde J.-M."/>
        </authorList>
    </citation>
    <scope>NUCLEOTIDE SEQUENCE [LARGE SCALE MRNA]</scope>
    <source>
        <strain>CB</strain>
        <tissue>Bursa of Fabricius</tissue>
    </source>
</reference>
<reference key="2">
    <citation type="journal article" date="1997" name="J. Biol. Chem.">
        <title>Cloning of the human prolyl 4-hydroxylase alpha subunit isoform alpha(II) and characterization of the type II enzyme tetramer. The alpha(I) and alpha(II) subunits do not form a mixed alpha(I)alpha(II)beta2 tetramer.</title>
        <authorList>
            <person name="Annunen P."/>
            <person name="Helaakoski T."/>
            <person name="Myllyharju J."/>
            <person name="Veijola J."/>
            <person name="Pihlajaniemi T."/>
            <person name="Kivirikko K.I."/>
        </authorList>
    </citation>
    <scope>FUNCTION</scope>
    <scope>CATALYTIC ACTIVITY</scope>
</reference>
<organism>
    <name type="scientific">Gallus gallus</name>
    <name type="common">Chicken</name>
    <dbReference type="NCBI Taxonomy" id="9031"/>
    <lineage>
        <taxon>Eukaryota</taxon>
        <taxon>Metazoa</taxon>
        <taxon>Chordata</taxon>
        <taxon>Craniata</taxon>
        <taxon>Vertebrata</taxon>
        <taxon>Euteleostomi</taxon>
        <taxon>Archelosauria</taxon>
        <taxon>Archosauria</taxon>
        <taxon>Dinosauria</taxon>
        <taxon>Saurischia</taxon>
        <taxon>Theropoda</taxon>
        <taxon>Coelurosauria</taxon>
        <taxon>Aves</taxon>
        <taxon>Neognathae</taxon>
        <taxon>Galloanserae</taxon>
        <taxon>Galliformes</taxon>
        <taxon>Phasianidae</taxon>
        <taxon>Phasianinae</taxon>
        <taxon>Gallus</taxon>
    </lineage>
</organism>
<sequence>MKPWLCLVFFTSAFLIWHAEAEFFTSIGQMTDLIYAEKDLVQSLKEYIRAEETKLSQIKSWAEKMDVLTSKSTSDPEGYLAHPVNAYKLVKRLNTDWLELENLVLQDTTNGFITNLTIQRQFFPTEEDETGAAKALMRLQDTYKLDPETLSRGNLPGTKYRSSLTVSDCFGMGKTAYNDGDYYHTVLWMEQALKQHDEGEDTTVSKVEILDYLSYAVFQFGDLHRAMELTRRLISLDSTHERAGSNLRYFEKLLEKEREKPSNKTVATTEPVVQSGAYERPLDYLPERDIYEALCRGEGVKMTPRRQKRLFCRYHDGNRNPHLLIAPFKEEDEWDSPHIVRYYDVMSDEEIEKIKQLAKPKLARATVRDPKTGVLTVASYRVSKSSWLEEDDDPVVAKVNQRMQQITGLTVKTAELLQVANYGMGGQYEPHFDFSRRPFDSTLKSEGNRLATFLNYMSDVEAGGATVFPDFGAAIWPKKGTAVFWYNLFRSGEGDYRTRHAACPVLVGCKWVSNKWFHERGNEFLRPCGRTEVD</sequence>
<dbReference type="EC" id="1.14.11.2" evidence="5"/>
<dbReference type="EMBL" id="AJ719729">
    <property type="protein sequence ID" value="CAG31388.1"/>
    <property type="molecule type" value="mRNA"/>
</dbReference>
<dbReference type="RefSeq" id="NP_001006155.1">
    <property type="nucleotide sequence ID" value="NM_001006155.1"/>
</dbReference>
<dbReference type="RefSeq" id="XP_025010629.2">
    <property type="nucleotide sequence ID" value="XM_025154861.3"/>
</dbReference>
<dbReference type="RefSeq" id="XP_040502860.1">
    <property type="nucleotide sequence ID" value="XM_040646926.2"/>
</dbReference>
<dbReference type="RefSeq" id="XP_040502861.1">
    <property type="nucleotide sequence ID" value="XM_040646927.2"/>
</dbReference>
<dbReference type="RefSeq" id="XP_046782978.1">
    <property type="nucleotide sequence ID" value="XM_046927022.1"/>
</dbReference>
<dbReference type="RefSeq" id="XP_046782979.1">
    <property type="nucleotide sequence ID" value="XM_046927023.1"/>
</dbReference>
<dbReference type="RefSeq" id="XP_046782980.1">
    <property type="nucleotide sequence ID" value="XM_046927024.1"/>
</dbReference>
<dbReference type="SMR" id="Q5ZLK5"/>
<dbReference type="FunCoup" id="Q5ZLK5">
    <property type="interactions" value="113"/>
</dbReference>
<dbReference type="STRING" id="9031.ENSGALP00000010783"/>
<dbReference type="GlyCosmos" id="Q5ZLK5">
    <property type="glycosylation" value="2 sites, No reported glycans"/>
</dbReference>
<dbReference type="GlyGen" id="Q5ZLK5">
    <property type="glycosylation" value="2 sites"/>
</dbReference>
<dbReference type="PaxDb" id="9031-ENSGALP00000010783"/>
<dbReference type="Ensembl" id="ENSGALT00010039013.1">
    <property type="protein sequence ID" value="ENSGALP00010022534.1"/>
    <property type="gene ID" value="ENSGALG00010016225.1"/>
</dbReference>
<dbReference type="GeneID" id="416326"/>
<dbReference type="KEGG" id="gga:416326"/>
<dbReference type="CTD" id="8974"/>
<dbReference type="VEuPathDB" id="HostDB:geneid_416326"/>
<dbReference type="eggNOG" id="KOG1591">
    <property type="taxonomic scope" value="Eukaryota"/>
</dbReference>
<dbReference type="GeneTree" id="ENSGT00940000157695"/>
<dbReference type="InParanoid" id="Q5ZLK5"/>
<dbReference type="OrthoDB" id="420380at2759"/>
<dbReference type="SABIO-RK" id="Q5ZLK5"/>
<dbReference type="PRO" id="PR:Q5ZLK5"/>
<dbReference type="Proteomes" id="UP000000539">
    <property type="component" value="Chromosome 13"/>
</dbReference>
<dbReference type="GO" id="GO:0005783">
    <property type="term" value="C:endoplasmic reticulum"/>
    <property type="evidence" value="ECO:0000318"/>
    <property type="project" value="GO_Central"/>
</dbReference>
<dbReference type="GO" id="GO:0005788">
    <property type="term" value="C:endoplasmic reticulum lumen"/>
    <property type="evidence" value="ECO:0007669"/>
    <property type="project" value="UniProtKB-SubCell"/>
</dbReference>
<dbReference type="GO" id="GO:0005506">
    <property type="term" value="F:iron ion binding"/>
    <property type="evidence" value="ECO:0007669"/>
    <property type="project" value="InterPro"/>
</dbReference>
<dbReference type="GO" id="GO:0031418">
    <property type="term" value="F:L-ascorbic acid binding"/>
    <property type="evidence" value="ECO:0007669"/>
    <property type="project" value="UniProtKB-KW"/>
</dbReference>
<dbReference type="GO" id="GO:0004656">
    <property type="term" value="F:procollagen-proline 4-dioxygenase activity"/>
    <property type="evidence" value="ECO:0000318"/>
    <property type="project" value="GO_Central"/>
</dbReference>
<dbReference type="FunFam" id="1.25.40.10:FF:000006">
    <property type="entry name" value="Prolyl 4-hydroxylase subunit alpha 2"/>
    <property type="match status" value="1"/>
</dbReference>
<dbReference type="FunFam" id="2.60.120.620:FF:000001">
    <property type="entry name" value="Prolyl 4-hydroxylase subunit alpha 2"/>
    <property type="match status" value="1"/>
</dbReference>
<dbReference type="Gene3D" id="6.10.140.1460">
    <property type="match status" value="1"/>
</dbReference>
<dbReference type="Gene3D" id="2.60.120.620">
    <property type="entry name" value="q2cbj1_9rhob like domain"/>
    <property type="match status" value="1"/>
</dbReference>
<dbReference type="Gene3D" id="1.25.40.10">
    <property type="entry name" value="Tetratricopeptide repeat domain"/>
    <property type="match status" value="1"/>
</dbReference>
<dbReference type="InterPro" id="IPR005123">
    <property type="entry name" value="Oxoglu/Fe-dep_dioxygenase_dom"/>
</dbReference>
<dbReference type="InterPro" id="IPR045054">
    <property type="entry name" value="P4HA-like"/>
</dbReference>
<dbReference type="InterPro" id="IPR006620">
    <property type="entry name" value="Pro_4_hyd_alph"/>
</dbReference>
<dbReference type="InterPro" id="IPR044862">
    <property type="entry name" value="Pro_4_hyd_alph_FE2OG_OXY"/>
</dbReference>
<dbReference type="InterPro" id="IPR013547">
    <property type="entry name" value="Pro_4_hyd_alph_N"/>
</dbReference>
<dbReference type="InterPro" id="IPR011990">
    <property type="entry name" value="TPR-like_helical_dom_sf"/>
</dbReference>
<dbReference type="PANTHER" id="PTHR10869">
    <property type="entry name" value="PROLYL 4-HYDROXYLASE ALPHA SUBUNIT"/>
    <property type="match status" value="1"/>
</dbReference>
<dbReference type="PANTHER" id="PTHR10869:SF244">
    <property type="entry name" value="PROLYL 4-HYDROXYLASE SUBUNIT ALPHA-2"/>
    <property type="match status" value="1"/>
</dbReference>
<dbReference type="Pfam" id="PF13640">
    <property type="entry name" value="2OG-FeII_Oxy_3"/>
    <property type="match status" value="1"/>
</dbReference>
<dbReference type="Pfam" id="PF08336">
    <property type="entry name" value="P4Ha_N"/>
    <property type="match status" value="1"/>
</dbReference>
<dbReference type="Pfam" id="PF23558">
    <property type="entry name" value="TPR_P4H"/>
    <property type="match status" value="1"/>
</dbReference>
<dbReference type="SMART" id="SM00702">
    <property type="entry name" value="P4Hc"/>
    <property type="match status" value="1"/>
</dbReference>
<dbReference type="SUPFAM" id="SSF48452">
    <property type="entry name" value="TPR-like"/>
    <property type="match status" value="1"/>
</dbReference>
<dbReference type="PROSITE" id="PS51471">
    <property type="entry name" value="FE2OG_OXY"/>
    <property type="match status" value="1"/>
</dbReference>
<keyword id="KW-0223">Dioxygenase</keyword>
<keyword id="KW-0256">Endoplasmic reticulum</keyword>
<keyword id="KW-0325">Glycoprotein</keyword>
<keyword id="KW-0408">Iron</keyword>
<keyword id="KW-0479">Metal-binding</keyword>
<keyword id="KW-0560">Oxidoreductase</keyword>
<keyword id="KW-1185">Reference proteome</keyword>
<keyword id="KW-0732">Signal</keyword>
<keyword id="KW-0802">TPR repeat</keyword>
<keyword id="KW-0847">Vitamin C</keyword>
<accession>Q5ZLK5</accession>
<evidence type="ECO:0000250" key="1"/>
<evidence type="ECO:0000250" key="2">
    <source>
        <dbReference type="UniProtKB" id="O15460"/>
    </source>
</evidence>
<evidence type="ECO:0000255" key="3"/>
<evidence type="ECO:0000255" key="4">
    <source>
        <dbReference type="PROSITE-ProRule" id="PRU00805"/>
    </source>
</evidence>
<evidence type="ECO:0000269" key="5">
    <source>
    </source>
</evidence>
<evidence type="ECO:0000305" key="6"/>
<proteinExistence type="evidence at protein level"/>
<name>P4HA2_CHICK</name>
<comment type="function">
    <text evidence="5">Catalyzes the post-translational formation of 4-hydroxyproline in -Xaa-Pro-Gly- sequences in collagens and other proteins.</text>
</comment>
<comment type="catalytic activity">
    <reaction evidence="5">
        <text>L-prolyl-[collagen] + 2-oxoglutarate + O2 = trans-4-hydroxy-L-prolyl-[collagen] + succinate + CO2</text>
        <dbReference type="Rhea" id="RHEA:18945"/>
        <dbReference type="Rhea" id="RHEA-COMP:11676"/>
        <dbReference type="Rhea" id="RHEA-COMP:11680"/>
        <dbReference type="ChEBI" id="CHEBI:15379"/>
        <dbReference type="ChEBI" id="CHEBI:16526"/>
        <dbReference type="ChEBI" id="CHEBI:16810"/>
        <dbReference type="ChEBI" id="CHEBI:30031"/>
        <dbReference type="ChEBI" id="CHEBI:50342"/>
        <dbReference type="ChEBI" id="CHEBI:61965"/>
        <dbReference type="EC" id="1.14.11.2"/>
    </reaction>
</comment>
<comment type="cofactor">
    <cofactor evidence="4">
        <name>Fe(2+)</name>
        <dbReference type="ChEBI" id="CHEBI:29033"/>
    </cofactor>
    <text evidence="4">Binds 1 Fe(2+) ion per subunit.</text>
</comment>
<comment type="cofactor">
    <cofactor evidence="2">
        <name>L-ascorbate</name>
        <dbReference type="ChEBI" id="CHEBI:38290"/>
    </cofactor>
</comment>
<comment type="subunit">
    <text evidence="2">Heterotetramer of two alpha-2 chains and two beta chains (the beta chain is the multi-functional PDI).</text>
</comment>
<comment type="subcellular location">
    <subcellularLocation>
        <location evidence="1">Endoplasmic reticulum lumen</location>
    </subcellularLocation>
</comment>
<comment type="similarity">
    <text evidence="6">Belongs to the P4HA family.</text>
</comment>
<gene>
    <name type="primary">P4HA2</name>
    <name type="ORF">RCJMB04_5l17</name>
</gene>